<proteinExistence type="inferred from homology"/>
<keyword id="KW-0143">Chaperone</keyword>
<keyword id="KW-0963">Cytoplasm</keyword>
<keyword id="KW-0235">DNA replication</keyword>
<keyword id="KW-0479">Metal-binding</keyword>
<keyword id="KW-0677">Repeat</keyword>
<keyword id="KW-0346">Stress response</keyword>
<keyword id="KW-0862">Zinc</keyword>
<keyword id="KW-0863">Zinc-finger</keyword>
<comment type="function">
    <text evidence="1">Participates actively in the response to hyperosmotic and heat shock by preventing the aggregation of stress-denatured proteins and by disaggregating proteins, also in an autonomous, DnaK-independent fashion. Unfolded proteins bind initially to DnaJ; upon interaction with the DnaJ-bound protein, DnaK hydrolyzes its bound ATP, resulting in the formation of a stable complex. GrpE releases ADP from DnaK; ATP binding to DnaK triggers the release of the substrate protein, thus completing the reaction cycle. Several rounds of ATP-dependent interactions between DnaJ, DnaK and GrpE are required for fully efficient folding. Also involved, together with DnaK and GrpE, in the DNA replication of plasmids through activation of initiation proteins.</text>
</comment>
<comment type="cofactor">
    <cofactor evidence="1">
        <name>Zn(2+)</name>
        <dbReference type="ChEBI" id="CHEBI:29105"/>
    </cofactor>
    <text evidence="1">Binds 2 Zn(2+) ions per monomer.</text>
</comment>
<comment type="subunit">
    <text evidence="1">Homodimer.</text>
</comment>
<comment type="subcellular location">
    <subcellularLocation>
        <location evidence="1">Cytoplasm</location>
    </subcellularLocation>
</comment>
<comment type="domain">
    <text evidence="1">The J domain is necessary and sufficient to stimulate DnaK ATPase activity. Zinc center 1 plays an important role in the autonomous, DnaK-independent chaperone activity of DnaJ. Zinc center 2 is essential for interaction with DnaK and for DnaJ activity.</text>
</comment>
<comment type="similarity">
    <text evidence="1">Belongs to the DnaJ family.</text>
</comment>
<gene>
    <name evidence="1" type="primary">dnaJ</name>
    <name type="ordered locus">Mext_2961</name>
</gene>
<sequence>MSKRDYYEVLGVAKTASESELKVAFRKLAMVHHPDRNPGDKEAEIKFKEVNEAYQCLSDGQKRAAYDRFGHAAFSQGGAGGPGFGNEFGDFMSDIFENFFGDGRAAPGGGAGRGRGGAPGRERGSDLRYNLEISLEEAFAGKTETIRIPTSIACETCSGTGAKAGSKPRTCSTCGGYGRVRAAQGFFAIERTCPNCHGRGEVVDDPCTACSGAGRVNRERTLSINVPAGVDDGLRIRLAGEGESGMRGGPAGDLYVFLSIKPHPFFQRDGADLFCRVPISMVTAALSGEITVPVIDGSQTQVRIPAGTQTGKQFRIKSKGMPVLRSREVGDLYIQVSVETPQNLTKRQRELLQEFDQSASDENHPESAGFFSKVRDFFVSGATRA</sequence>
<feature type="chain" id="PRO_1000164269" description="Chaperone protein DnaJ">
    <location>
        <begin position="1"/>
        <end position="385"/>
    </location>
</feature>
<feature type="domain" description="J" evidence="1">
    <location>
        <begin position="5"/>
        <end position="70"/>
    </location>
</feature>
<feature type="repeat" description="CXXCXGXG motif">
    <location>
        <begin position="154"/>
        <end position="161"/>
    </location>
</feature>
<feature type="repeat" description="CXXCXGXG motif">
    <location>
        <begin position="171"/>
        <end position="178"/>
    </location>
</feature>
<feature type="repeat" description="CXXCXGXG motif">
    <location>
        <begin position="193"/>
        <end position="200"/>
    </location>
</feature>
<feature type="repeat" description="CXXCXGXG motif">
    <location>
        <begin position="207"/>
        <end position="214"/>
    </location>
</feature>
<feature type="zinc finger region" description="CR-type" evidence="1">
    <location>
        <begin position="141"/>
        <end position="219"/>
    </location>
</feature>
<feature type="binding site" evidence="1">
    <location>
        <position position="154"/>
    </location>
    <ligand>
        <name>Zn(2+)</name>
        <dbReference type="ChEBI" id="CHEBI:29105"/>
        <label>1</label>
    </ligand>
</feature>
<feature type="binding site" evidence="1">
    <location>
        <position position="157"/>
    </location>
    <ligand>
        <name>Zn(2+)</name>
        <dbReference type="ChEBI" id="CHEBI:29105"/>
        <label>1</label>
    </ligand>
</feature>
<feature type="binding site" evidence="1">
    <location>
        <position position="171"/>
    </location>
    <ligand>
        <name>Zn(2+)</name>
        <dbReference type="ChEBI" id="CHEBI:29105"/>
        <label>2</label>
    </ligand>
</feature>
<feature type="binding site" evidence="1">
    <location>
        <position position="174"/>
    </location>
    <ligand>
        <name>Zn(2+)</name>
        <dbReference type="ChEBI" id="CHEBI:29105"/>
        <label>2</label>
    </ligand>
</feature>
<feature type="binding site" evidence="1">
    <location>
        <position position="193"/>
    </location>
    <ligand>
        <name>Zn(2+)</name>
        <dbReference type="ChEBI" id="CHEBI:29105"/>
        <label>2</label>
    </ligand>
</feature>
<feature type="binding site" evidence="1">
    <location>
        <position position="196"/>
    </location>
    <ligand>
        <name>Zn(2+)</name>
        <dbReference type="ChEBI" id="CHEBI:29105"/>
        <label>2</label>
    </ligand>
</feature>
<feature type="binding site" evidence="1">
    <location>
        <position position="207"/>
    </location>
    <ligand>
        <name>Zn(2+)</name>
        <dbReference type="ChEBI" id="CHEBI:29105"/>
        <label>1</label>
    </ligand>
</feature>
<feature type="binding site" evidence="1">
    <location>
        <position position="210"/>
    </location>
    <ligand>
        <name>Zn(2+)</name>
        <dbReference type="ChEBI" id="CHEBI:29105"/>
        <label>1</label>
    </ligand>
</feature>
<accession>A9W6R8</accession>
<name>DNAJ_METEP</name>
<dbReference type="EMBL" id="CP000908">
    <property type="protein sequence ID" value="ABY31350.1"/>
    <property type="molecule type" value="Genomic_DNA"/>
</dbReference>
<dbReference type="RefSeq" id="WP_003603955.1">
    <property type="nucleotide sequence ID" value="NC_010172.1"/>
</dbReference>
<dbReference type="SMR" id="A9W6R8"/>
<dbReference type="GeneID" id="72990606"/>
<dbReference type="KEGG" id="mex:Mext_2961"/>
<dbReference type="eggNOG" id="COG0484">
    <property type="taxonomic scope" value="Bacteria"/>
</dbReference>
<dbReference type="HOGENOM" id="CLU_017633_0_7_5"/>
<dbReference type="BioCyc" id="MEXT419610:MEXT_RS14910-MONOMER"/>
<dbReference type="GO" id="GO:0005737">
    <property type="term" value="C:cytoplasm"/>
    <property type="evidence" value="ECO:0007669"/>
    <property type="project" value="UniProtKB-SubCell"/>
</dbReference>
<dbReference type="GO" id="GO:0005524">
    <property type="term" value="F:ATP binding"/>
    <property type="evidence" value="ECO:0007669"/>
    <property type="project" value="InterPro"/>
</dbReference>
<dbReference type="GO" id="GO:0031072">
    <property type="term" value="F:heat shock protein binding"/>
    <property type="evidence" value="ECO:0007669"/>
    <property type="project" value="InterPro"/>
</dbReference>
<dbReference type="GO" id="GO:0051082">
    <property type="term" value="F:unfolded protein binding"/>
    <property type="evidence" value="ECO:0007669"/>
    <property type="project" value="UniProtKB-UniRule"/>
</dbReference>
<dbReference type="GO" id="GO:0008270">
    <property type="term" value="F:zinc ion binding"/>
    <property type="evidence" value="ECO:0007669"/>
    <property type="project" value="UniProtKB-UniRule"/>
</dbReference>
<dbReference type="GO" id="GO:0051085">
    <property type="term" value="P:chaperone cofactor-dependent protein refolding"/>
    <property type="evidence" value="ECO:0007669"/>
    <property type="project" value="TreeGrafter"/>
</dbReference>
<dbReference type="GO" id="GO:0006260">
    <property type="term" value="P:DNA replication"/>
    <property type="evidence" value="ECO:0007669"/>
    <property type="project" value="UniProtKB-KW"/>
</dbReference>
<dbReference type="GO" id="GO:0042026">
    <property type="term" value="P:protein refolding"/>
    <property type="evidence" value="ECO:0007669"/>
    <property type="project" value="TreeGrafter"/>
</dbReference>
<dbReference type="GO" id="GO:0009408">
    <property type="term" value="P:response to heat"/>
    <property type="evidence" value="ECO:0007669"/>
    <property type="project" value="InterPro"/>
</dbReference>
<dbReference type="CDD" id="cd06257">
    <property type="entry name" value="DnaJ"/>
    <property type="match status" value="1"/>
</dbReference>
<dbReference type="CDD" id="cd10747">
    <property type="entry name" value="DnaJ_C"/>
    <property type="match status" value="1"/>
</dbReference>
<dbReference type="CDD" id="cd10719">
    <property type="entry name" value="DnaJ_zf"/>
    <property type="match status" value="1"/>
</dbReference>
<dbReference type="FunFam" id="1.10.287.110:FF:000034">
    <property type="entry name" value="Chaperone protein DnaJ"/>
    <property type="match status" value="1"/>
</dbReference>
<dbReference type="FunFam" id="2.10.230.10:FF:000002">
    <property type="entry name" value="Molecular chaperone DnaJ"/>
    <property type="match status" value="1"/>
</dbReference>
<dbReference type="FunFam" id="2.60.260.20:FF:000004">
    <property type="entry name" value="Molecular chaperone DnaJ"/>
    <property type="match status" value="1"/>
</dbReference>
<dbReference type="Gene3D" id="1.10.287.110">
    <property type="entry name" value="DnaJ domain"/>
    <property type="match status" value="1"/>
</dbReference>
<dbReference type="Gene3D" id="2.10.230.10">
    <property type="entry name" value="Heat shock protein DnaJ, cysteine-rich domain"/>
    <property type="match status" value="1"/>
</dbReference>
<dbReference type="Gene3D" id="2.60.260.20">
    <property type="entry name" value="Urease metallochaperone UreE, N-terminal domain"/>
    <property type="match status" value="2"/>
</dbReference>
<dbReference type="HAMAP" id="MF_01152">
    <property type="entry name" value="DnaJ"/>
    <property type="match status" value="1"/>
</dbReference>
<dbReference type="InterPro" id="IPR012724">
    <property type="entry name" value="DnaJ"/>
</dbReference>
<dbReference type="InterPro" id="IPR002939">
    <property type="entry name" value="DnaJ_C"/>
</dbReference>
<dbReference type="InterPro" id="IPR001623">
    <property type="entry name" value="DnaJ_domain"/>
</dbReference>
<dbReference type="InterPro" id="IPR018253">
    <property type="entry name" value="DnaJ_domain_CS"/>
</dbReference>
<dbReference type="InterPro" id="IPR008971">
    <property type="entry name" value="HSP40/DnaJ_pept-bd"/>
</dbReference>
<dbReference type="InterPro" id="IPR001305">
    <property type="entry name" value="HSP_DnaJ_Cys-rich_dom"/>
</dbReference>
<dbReference type="InterPro" id="IPR036410">
    <property type="entry name" value="HSP_DnaJ_Cys-rich_dom_sf"/>
</dbReference>
<dbReference type="InterPro" id="IPR036869">
    <property type="entry name" value="J_dom_sf"/>
</dbReference>
<dbReference type="NCBIfam" id="TIGR02349">
    <property type="entry name" value="DnaJ_bact"/>
    <property type="match status" value="1"/>
</dbReference>
<dbReference type="NCBIfam" id="NF008035">
    <property type="entry name" value="PRK10767.1"/>
    <property type="match status" value="1"/>
</dbReference>
<dbReference type="PANTHER" id="PTHR43096:SF48">
    <property type="entry name" value="CHAPERONE PROTEIN DNAJ"/>
    <property type="match status" value="1"/>
</dbReference>
<dbReference type="PANTHER" id="PTHR43096">
    <property type="entry name" value="DNAJ HOMOLOG 1, MITOCHONDRIAL-RELATED"/>
    <property type="match status" value="1"/>
</dbReference>
<dbReference type="Pfam" id="PF00226">
    <property type="entry name" value="DnaJ"/>
    <property type="match status" value="1"/>
</dbReference>
<dbReference type="Pfam" id="PF01556">
    <property type="entry name" value="DnaJ_C"/>
    <property type="match status" value="1"/>
</dbReference>
<dbReference type="Pfam" id="PF00684">
    <property type="entry name" value="DnaJ_CXXCXGXG"/>
    <property type="match status" value="1"/>
</dbReference>
<dbReference type="PRINTS" id="PR00625">
    <property type="entry name" value="JDOMAIN"/>
</dbReference>
<dbReference type="SMART" id="SM00271">
    <property type="entry name" value="DnaJ"/>
    <property type="match status" value="1"/>
</dbReference>
<dbReference type="SUPFAM" id="SSF46565">
    <property type="entry name" value="Chaperone J-domain"/>
    <property type="match status" value="1"/>
</dbReference>
<dbReference type="SUPFAM" id="SSF57938">
    <property type="entry name" value="DnaJ/Hsp40 cysteine-rich domain"/>
    <property type="match status" value="1"/>
</dbReference>
<dbReference type="SUPFAM" id="SSF49493">
    <property type="entry name" value="HSP40/DnaJ peptide-binding domain"/>
    <property type="match status" value="2"/>
</dbReference>
<dbReference type="PROSITE" id="PS00636">
    <property type="entry name" value="DNAJ_1"/>
    <property type="match status" value="1"/>
</dbReference>
<dbReference type="PROSITE" id="PS50076">
    <property type="entry name" value="DNAJ_2"/>
    <property type="match status" value="1"/>
</dbReference>
<dbReference type="PROSITE" id="PS51188">
    <property type="entry name" value="ZF_CR"/>
    <property type="match status" value="1"/>
</dbReference>
<protein>
    <recommendedName>
        <fullName evidence="1">Chaperone protein DnaJ</fullName>
    </recommendedName>
</protein>
<reference key="1">
    <citation type="submission" date="2007-12" db="EMBL/GenBank/DDBJ databases">
        <title>Complete sequence of Methylobacterium extorquens PA1.</title>
        <authorList>
            <consortium name="US DOE Joint Genome Institute"/>
            <person name="Copeland A."/>
            <person name="Lucas S."/>
            <person name="Lapidus A."/>
            <person name="Barry K."/>
            <person name="Glavina del Rio T."/>
            <person name="Dalin E."/>
            <person name="Tice H."/>
            <person name="Pitluck S."/>
            <person name="Saunders E."/>
            <person name="Brettin T."/>
            <person name="Bruce D."/>
            <person name="Detter J.C."/>
            <person name="Han C."/>
            <person name="Schmutz J."/>
            <person name="Larimer F."/>
            <person name="Land M."/>
            <person name="Hauser L."/>
            <person name="Kyrpides N."/>
            <person name="Kim E."/>
            <person name="Marx C."/>
            <person name="Richardson P."/>
        </authorList>
    </citation>
    <scope>NUCLEOTIDE SEQUENCE [LARGE SCALE GENOMIC DNA]</scope>
    <source>
        <strain>PA1</strain>
    </source>
</reference>
<evidence type="ECO:0000255" key="1">
    <source>
        <dbReference type="HAMAP-Rule" id="MF_01152"/>
    </source>
</evidence>
<organism>
    <name type="scientific">Methylorubrum extorquens (strain PA1)</name>
    <name type="common">Methylobacterium extorquens</name>
    <dbReference type="NCBI Taxonomy" id="419610"/>
    <lineage>
        <taxon>Bacteria</taxon>
        <taxon>Pseudomonadati</taxon>
        <taxon>Pseudomonadota</taxon>
        <taxon>Alphaproteobacteria</taxon>
        <taxon>Hyphomicrobiales</taxon>
        <taxon>Methylobacteriaceae</taxon>
        <taxon>Methylorubrum</taxon>
    </lineage>
</organism>